<dbReference type="EC" id="3.5.1.135" evidence="2"/>
<dbReference type="EMBL" id="CP001138">
    <property type="protein sequence ID" value="ACH48470.1"/>
    <property type="molecule type" value="Genomic_DNA"/>
</dbReference>
<dbReference type="RefSeq" id="WP_001182977.1">
    <property type="nucleotide sequence ID" value="NC_011149.1"/>
</dbReference>
<dbReference type="SMR" id="B5F5H4"/>
<dbReference type="KEGG" id="sea:SeAg_B3207"/>
<dbReference type="HOGENOM" id="CLU_152586_0_0_6"/>
<dbReference type="Proteomes" id="UP000008819">
    <property type="component" value="Chromosome"/>
</dbReference>
<dbReference type="GO" id="GO:0005829">
    <property type="term" value="C:cytosol"/>
    <property type="evidence" value="ECO:0007669"/>
    <property type="project" value="TreeGrafter"/>
</dbReference>
<dbReference type="GO" id="GO:0016813">
    <property type="term" value="F:hydrolase activity, acting on carbon-nitrogen (but not peptide) bonds, in linear amidines"/>
    <property type="evidence" value="ECO:0007669"/>
    <property type="project" value="UniProtKB-UniRule"/>
</dbReference>
<dbReference type="GO" id="GO:0106251">
    <property type="term" value="F:N4-acetylcytidine amidohydrolase activity"/>
    <property type="evidence" value="ECO:0007669"/>
    <property type="project" value="RHEA"/>
</dbReference>
<dbReference type="CDD" id="cd06552">
    <property type="entry name" value="ASCH_yqfb_like"/>
    <property type="match status" value="1"/>
</dbReference>
<dbReference type="FunFam" id="2.30.130.30:FF:000001">
    <property type="entry name" value="UPF0267 protein YqfB"/>
    <property type="match status" value="1"/>
</dbReference>
<dbReference type="Gene3D" id="2.30.130.30">
    <property type="entry name" value="Hypothetical protein"/>
    <property type="match status" value="1"/>
</dbReference>
<dbReference type="HAMAP" id="MF_00684">
    <property type="entry name" value="ac4C_amidohydr"/>
    <property type="match status" value="1"/>
</dbReference>
<dbReference type="InterPro" id="IPR008314">
    <property type="entry name" value="AC4CH"/>
</dbReference>
<dbReference type="InterPro" id="IPR007374">
    <property type="entry name" value="ASCH_domain"/>
</dbReference>
<dbReference type="InterPro" id="IPR015947">
    <property type="entry name" value="PUA-like_sf"/>
</dbReference>
<dbReference type="NCBIfam" id="NF003443">
    <property type="entry name" value="PRK04980.1"/>
    <property type="match status" value="1"/>
</dbReference>
<dbReference type="PANTHER" id="PTHR38088">
    <property type="entry name" value="UCP029143 FAMILY PROTEIN"/>
    <property type="match status" value="1"/>
</dbReference>
<dbReference type="PANTHER" id="PTHR38088:SF2">
    <property type="entry name" value="UCP029143 FAMILY PROTEIN"/>
    <property type="match status" value="1"/>
</dbReference>
<dbReference type="Pfam" id="PF04266">
    <property type="entry name" value="ASCH"/>
    <property type="match status" value="1"/>
</dbReference>
<dbReference type="PIRSF" id="PIRSF029143">
    <property type="entry name" value="UCP029143"/>
    <property type="match status" value="1"/>
</dbReference>
<dbReference type="SMART" id="SM01022">
    <property type="entry name" value="ASCH"/>
    <property type="match status" value="1"/>
</dbReference>
<dbReference type="SUPFAM" id="SSF88697">
    <property type="entry name" value="PUA domain-like"/>
    <property type="match status" value="1"/>
</dbReference>
<reference key="1">
    <citation type="journal article" date="2011" name="J. Bacteriol.">
        <title>Comparative genomics of 28 Salmonella enterica isolates: evidence for CRISPR-mediated adaptive sublineage evolution.</title>
        <authorList>
            <person name="Fricke W.F."/>
            <person name="Mammel M.K."/>
            <person name="McDermott P.F."/>
            <person name="Tartera C."/>
            <person name="White D.G."/>
            <person name="Leclerc J.E."/>
            <person name="Ravel J."/>
            <person name="Cebula T.A."/>
        </authorList>
    </citation>
    <scope>NUCLEOTIDE SEQUENCE [LARGE SCALE GENOMIC DNA]</scope>
    <source>
        <strain>SL483</strain>
    </source>
</reference>
<evidence type="ECO:0000255" key="1"/>
<evidence type="ECO:0000255" key="2">
    <source>
        <dbReference type="HAMAP-Rule" id="MF_00684"/>
    </source>
</evidence>
<proteinExistence type="inferred from homology"/>
<sequence>MQPNDITFFQRFQNDILAGRKTITIRDASESHFKAGDVLRVGRFEDDGYFCTIEVTGTSTVTLDTLNEKHAQQENMSLDELKRVIAEIYPNQTQFYVIDFKCLR</sequence>
<gene>
    <name type="primary">yqfB</name>
    <name type="ordered locus">SeAg_B3207</name>
</gene>
<comment type="function">
    <text evidence="2">Catalyzes the hydrolysis of N(4)-acetylcytidine (ac4C).</text>
</comment>
<comment type="catalytic activity">
    <reaction evidence="2">
        <text>N(4)-acetylcytidine + H2O = cytidine + acetate + H(+)</text>
        <dbReference type="Rhea" id="RHEA:62932"/>
        <dbReference type="ChEBI" id="CHEBI:15377"/>
        <dbReference type="ChEBI" id="CHEBI:15378"/>
        <dbReference type="ChEBI" id="CHEBI:17562"/>
        <dbReference type="ChEBI" id="CHEBI:30089"/>
        <dbReference type="ChEBI" id="CHEBI:70989"/>
        <dbReference type="EC" id="3.5.1.135"/>
    </reaction>
</comment>
<comment type="catalytic activity">
    <reaction evidence="2">
        <text>N(4)-acetyl-2'-deoxycytidine + H2O = 2'-deoxycytidine + acetate + H(+)</text>
        <dbReference type="Rhea" id="RHEA:62936"/>
        <dbReference type="ChEBI" id="CHEBI:15377"/>
        <dbReference type="ChEBI" id="CHEBI:15378"/>
        <dbReference type="ChEBI" id="CHEBI:15698"/>
        <dbReference type="ChEBI" id="CHEBI:30089"/>
        <dbReference type="ChEBI" id="CHEBI:146133"/>
        <dbReference type="EC" id="3.5.1.135"/>
    </reaction>
</comment>
<comment type="catalytic activity">
    <reaction evidence="2">
        <text>N(4)-acetylcytosine + H2O = cytosine + acetate + H(+)</text>
        <dbReference type="Rhea" id="RHEA:62940"/>
        <dbReference type="ChEBI" id="CHEBI:15377"/>
        <dbReference type="ChEBI" id="CHEBI:15378"/>
        <dbReference type="ChEBI" id="CHEBI:16040"/>
        <dbReference type="ChEBI" id="CHEBI:30089"/>
        <dbReference type="ChEBI" id="CHEBI:146134"/>
        <dbReference type="EC" id="3.5.1.135"/>
    </reaction>
</comment>
<comment type="similarity">
    <text evidence="2">Belongs to the N(4)-acetylcytidine amidohydrolase family.</text>
</comment>
<accession>B5F5H4</accession>
<name>AC4CH_SALA4</name>
<protein>
    <recommendedName>
        <fullName evidence="2">N(4)-acetylcytidine amidohydrolase</fullName>
        <shortName evidence="2">ac4C amidohydrolase</shortName>
        <ecNumber evidence="2">3.5.1.135</ecNumber>
    </recommendedName>
</protein>
<keyword id="KW-0378">Hydrolase</keyword>
<feature type="chain" id="PRO_1000131792" description="N(4)-acetylcytidine amidohydrolase">
    <location>
        <begin position="1"/>
        <end position="104"/>
    </location>
</feature>
<feature type="domain" description="ASCH" evidence="1">
    <location>
        <begin position="6"/>
        <end position="94"/>
    </location>
</feature>
<feature type="active site" description="Proton acceptor" evidence="2">
    <location>
        <position position="21"/>
    </location>
</feature>
<feature type="active site" description="Nucleophile" evidence="2">
    <location>
        <position position="24"/>
    </location>
</feature>
<feature type="active site" description="Proton donor" evidence="2">
    <location>
        <position position="74"/>
    </location>
</feature>
<organism>
    <name type="scientific">Salmonella agona (strain SL483)</name>
    <dbReference type="NCBI Taxonomy" id="454166"/>
    <lineage>
        <taxon>Bacteria</taxon>
        <taxon>Pseudomonadati</taxon>
        <taxon>Pseudomonadota</taxon>
        <taxon>Gammaproteobacteria</taxon>
        <taxon>Enterobacterales</taxon>
        <taxon>Enterobacteriaceae</taxon>
        <taxon>Salmonella</taxon>
    </lineage>
</organism>